<organismHost>
    <name type="scientific">Homo sapiens</name>
    <name type="common">Human</name>
    <dbReference type="NCBI Taxonomy" id="9606"/>
</organismHost>
<name>PG146_VACCA</name>
<reference key="1">
    <citation type="journal article" date="1998" name="Virology">
        <title>The complete genomic sequence of the modified vaccinia Ankara strain: comparison with other orthopoxviruses.</title>
        <authorList>
            <person name="Antoine G."/>
            <person name="Scheiflinger F."/>
            <person name="Dorner F."/>
            <person name="Falkner F.G."/>
        </authorList>
    </citation>
    <scope>NUCLEOTIDE SEQUENCE [LARGE SCALE GENOMIC DNA]</scope>
</reference>
<reference key="2">
    <citation type="submission" date="2004-04" db="EMBL/GenBank/DDBJ databases">
        <authorList>
            <person name="Esposito J.J."/>
            <person name="Frace M."/>
            <person name="Sammons S.A."/>
            <person name="Olsen-Rasmussen M.S."/>
            <person name="Osborne J."/>
            <person name="Khristova M."/>
            <person name="Wohlhueter R.M."/>
        </authorList>
    </citation>
    <scope>NUCLEOTIDE SEQUENCE [LARGE SCALE GENOMIC DNA]</scope>
    <source>
        <strain>Isolate Acambis 3000</strain>
    </source>
</reference>
<gene>
    <name type="primary">OPG146</name>
    <name type="ordered locus">MVA130L</name>
    <name type="ordered locus">ACAM3000_MVA_130</name>
    <name type="ORF">A19L</name>
</gene>
<dbReference type="EMBL" id="U94848">
    <property type="protein sequence ID" value="AAB96469.1"/>
    <property type="molecule type" value="Genomic_DNA"/>
</dbReference>
<dbReference type="EMBL" id="AY603355">
    <property type="protein sequence ID" value="AAT10529.1"/>
    <property type="molecule type" value="Genomic_DNA"/>
</dbReference>
<dbReference type="RefSeq" id="YP_233021.1">
    <property type="nucleotide sequence ID" value="NC_006998.1"/>
</dbReference>
<dbReference type="DNASU" id="3707669"/>
<dbReference type="GeneID" id="3707669"/>
<dbReference type="KEGG" id="vg:3707669"/>
<dbReference type="Proteomes" id="UP000159908">
    <property type="component" value="Segment"/>
</dbReference>
<dbReference type="Proteomes" id="UP000172909">
    <property type="component" value="Segment"/>
</dbReference>
<dbReference type="GO" id="GO:0030430">
    <property type="term" value="C:host cell cytoplasm"/>
    <property type="evidence" value="ECO:0007669"/>
    <property type="project" value="UniProtKB-SubCell"/>
</dbReference>
<dbReference type="GO" id="GO:0042025">
    <property type="term" value="C:host cell nucleus"/>
    <property type="evidence" value="ECO:0007669"/>
    <property type="project" value="UniProtKB-SubCell"/>
</dbReference>
<dbReference type="GO" id="GO:0044423">
    <property type="term" value="C:virion component"/>
    <property type="evidence" value="ECO:0007669"/>
    <property type="project" value="UniProtKB-KW"/>
</dbReference>
<dbReference type="InterPro" id="IPR007769">
    <property type="entry name" value="Poxvirus_A19"/>
</dbReference>
<dbReference type="Pfam" id="PF05077">
    <property type="entry name" value="DUF678"/>
    <property type="match status" value="1"/>
</dbReference>
<feature type="chain" id="PRO_0000099261" description="Protein OPG146">
    <location>
        <begin position="1"/>
        <end position="77"/>
    </location>
</feature>
<keyword id="KW-1035">Host cytoplasm</keyword>
<keyword id="KW-1048">Host nucleus</keyword>
<keyword id="KW-0597">Phosphoprotein</keyword>
<keyword id="KW-0946">Virion</keyword>
<comment type="function">
    <text evidence="1">Plays a role in the maturation of immature virions to infectious particles. May also participate in viral transcription.</text>
</comment>
<comment type="subunit">
    <text evidence="1">Interacts with capping enzyme RAP94/OPG109, the two large RNA polymerase subunits RPO147/OPG105 and RPO132/OPG151, the two early transcription factor subunits OPG185 and OPG133, one of the capping enzyme subunits OPG113, the nucleoside triphosphate phosphohydrolase OPG123, two core proteins OPG129 and OPG138, and a virion protein OPG064.</text>
</comment>
<comment type="subcellular location">
    <subcellularLocation>
        <location evidence="1">Virion</location>
    </subcellularLocation>
    <subcellularLocation>
        <location evidence="1">Host cytoplasm</location>
    </subcellularLocation>
    <subcellularLocation>
        <location evidence="1">Host nucleus</location>
    </subcellularLocation>
</comment>
<comment type="similarity">
    <text evidence="2">Belongs to the orthopoxvirus OPG146 family.</text>
</comment>
<proteinExistence type="inferred from homology"/>
<accession>P68713</accession>
<accession>Q76ZP9</accession>
<protein>
    <recommendedName>
        <fullName>Protein OPG146</fullName>
    </recommendedName>
</protein>
<evidence type="ECO:0000250" key="1">
    <source>
        <dbReference type="UniProtKB" id="P68714"/>
    </source>
</evidence>
<evidence type="ECO:0000305" key="2"/>
<sequence>MDSTNVRSGMKSRKKKPKTTVIDDDDDCMTCSACQSKLVKISDITKVSLDYINTMRGNTLACAACGSSLKLLNDFAS</sequence>
<organism>
    <name type="scientific">Vaccinia virus (strain Ankara)</name>
    <name type="common">VACV</name>
    <dbReference type="NCBI Taxonomy" id="126794"/>
    <lineage>
        <taxon>Viruses</taxon>
        <taxon>Varidnaviria</taxon>
        <taxon>Bamfordvirae</taxon>
        <taxon>Nucleocytoviricota</taxon>
        <taxon>Pokkesviricetes</taxon>
        <taxon>Chitovirales</taxon>
        <taxon>Poxviridae</taxon>
        <taxon>Chordopoxvirinae</taxon>
        <taxon>Orthopoxvirus</taxon>
        <taxon>Vaccinia virus</taxon>
    </lineage>
</organism>